<feature type="initiator methionine" description="Removed" evidence="1">
    <location>
        <position position="1"/>
    </location>
</feature>
<feature type="chain" id="PRO_0000371594" description="Small ribosomal subunit protein uS2">
    <location>
        <begin position="2"/>
        <end position="301"/>
    </location>
</feature>
<feature type="region of interest" description="Disordered" evidence="2">
    <location>
        <begin position="256"/>
        <end position="301"/>
    </location>
</feature>
<feature type="compositionally biased region" description="Pro residues" evidence="2">
    <location>
        <begin position="256"/>
        <end position="268"/>
    </location>
</feature>
<organism>
    <name type="scientific">Pinctada fucata</name>
    <name type="common">Akoya pearl oyster</name>
    <name type="synonym">Pinctada imbricata fucata</name>
    <dbReference type="NCBI Taxonomy" id="50426"/>
    <lineage>
        <taxon>Eukaryota</taxon>
        <taxon>Metazoa</taxon>
        <taxon>Spiralia</taxon>
        <taxon>Lophotrochozoa</taxon>
        <taxon>Mollusca</taxon>
        <taxon>Bivalvia</taxon>
        <taxon>Autobranchia</taxon>
        <taxon>Pteriomorphia</taxon>
        <taxon>Pterioida</taxon>
        <taxon>Pterioidea</taxon>
        <taxon>Pteriidae</taxon>
        <taxon>Pinctada</taxon>
    </lineage>
</organism>
<comment type="function">
    <text evidence="1">Required for the assembly and/or stability of the 40S ribosomal subunit. Required for the processing of the 20S rRNA-precursor to mature 18S rRNA in a late step of the maturation of 40S ribosomal subunits.</text>
</comment>
<comment type="subunit">
    <text evidence="1">Component of the small ribosomal subunit. Mature ribosomes consist of a small (40S) and a large (60S) subunit. The 40S subunit contains about 33 different proteins and 1 molecule of RNA (18S). The 60S subunit contains about 49 different proteins and 3 molecules of RNA (28S, 5.8S and 5S). Interacts with ribosomal protein S21.</text>
</comment>
<comment type="subcellular location">
    <subcellularLocation>
        <location evidence="1">Cytoplasm</location>
    </subcellularLocation>
</comment>
<comment type="similarity">
    <text evidence="1">Belongs to the universal ribosomal protein uS2 family.</text>
</comment>
<protein>
    <recommendedName>
        <fullName evidence="1">Small ribosomal subunit protein uS2</fullName>
    </recommendedName>
    <alternativeName>
        <fullName evidence="3">40S ribosomal protein SA</fullName>
    </alternativeName>
</protein>
<name>RSSA_PINFU</name>
<sequence length="301" mass="33520">MSGGLDVLALKEEDITKFLACSTHLGATNVDFQMEQYVYKRKPDGVYIINLRRTWEKLLLAARAIAAIENPADVCVISARPYGQRAVLKFASATGATPIAGRFTPGTFTNQIQAAFREPRLLVVTDPRIDHQPVTEASYVNIPVIALCNTDSPLRYVDVAIPCNNKSVHSVGLMWWLLAREVLRLRGTISRDHPWEVMVDLYFYRDPEEAEKEEQTVVEKPAVKSDEVQDQWATTDIAIQPPQQEVSDWAAESIPVAPPGQPFMPPPAKDWSASTTEDWSAASGPAPQSALNGRWHLRNWG</sequence>
<reference key="1">
    <citation type="submission" date="2007-02" db="EMBL/GenBank/DDBJ databases">
        <title>Cloning and characterization of 67kD laminin receptor in Pinctada fucata.</title>
        <authorList>
            <person name="Fu Y."/>
            <person name="Xie L."/>
            <person name="Zhang R."/>
        </authorList>
    </citation>
    <scope>NUCLEOTIDE SEQUENCE [MRNA]</scope>
</reference>
<keyword id="KW-0963">Cytoplasm</keyword>
<keyword id="KW-0687">Ribonucleoprotein</keyword>
<keyword id="KW-0689">Ribosomal protein</keyword>
<evidence type="ECO:0000255" key="1">
    <source>
        <dbReference type="HAMAP-Rule" id="MF_03015"/>
    </source>
</evidence>
<evidence type="ECO:0000256" key="2">
    <source>
        <dbReference type="SAM" id="MobiDB-lite"/>
    </source>
</evidence>
<evidence type="ECO:0000305" key="3"/>
<dbReference type="EMBL" id="EF427937">
    <property type="protein sequence ID" value="ABO10190.1"/>
    <property type="molecule type" value="mRNA"/>
</dbReference>
<dbReference type="SMR" id="A3RLT6"/>
<dbReference type="GO" id="GO:0022627">
    <property type="term" value="C:cytosolic small ribosomal subunit"/>
    <property type="evidence" value="ECO:0007669"/>
    <property type="project" value="UniProtKB-UniRule"/>
</dbReference>
<dbReference type="GO" id="GO:0003735">
    <property type="term" value="F:structural constituent of ribosome"/>
    <property type="evidence" value="ECO:0007669"/>
    <property type="project" value="UniProtKB-UniRule"/>
</dbReference>
<dbReference type="GO" id="GO:0000028">
    <property type="term" value="P:ribosomal small subunit assembly"/>
    <property type="evidence" value="ECO:0007669"/>
    <property type="project" value="UniProtKB-UniRule"/>
</dbReference>
<dbReference type="GO" id="GO:0006412">
    <property type="term" value="P:translation"/>
    <property type="evidence" value="ECO:0007669"/>
    <property type="project" value="UniProtKB-UniRule"/>
</dbReference>
<dbReference type="CDD" id="cd01425">
    <property type="entry name" value="RPS2"/>
    <property type="match status" value="1"/>
</dbReference>
<dbReference type="FunFam" id="3.40.50.10490:FF:000012">
    <property type="entry name" value="40S ribosomal protein SA"/>
    <property type="match status" value="1"/>
</dbReference>
<dbReference type="Gene3D" id="3.40.50.10490">
    <property type="entry name" value="Glucose-6-phosphate isomerase like protein, domain 1"/>
    <property type="match status" value="1"/>
</dbReference>
<dbReference type="HAMAP" id="MF_03015">
    <property type="entry name" value="Ribosomal_S2_euk"/>
    <property type="match status" value="1"/>
</dbReference>
<dbReference type="InterPro" id="IPR001865">
    <property type="entry name" value="Ribosomal_uS2"/>
</dbReference>
<dbReference type="InterPro" id="IPR032281">
    <property type="entry name" value="Ribosomal_uS2_C"/>
</dbReference>
<dbReference type="InterPro" id="IPR018130">
    <property type="entry name" value="Ribosomal_uS2_CS"/>
</dbReference>
<dbReference type="InterPro" id="IPR027498">
    <property type="entry name" value="Ribosomal_uS2_euk"/>
</dbReference>
<dbReference type="InterPro" id="IPR005707">
    <property type="entry name" value="Ribosomal_uS2_euk/arc"/>
</dbReference>
<dbReference type="InterPro" id="IPR023591">
    <property type="entry name" value="Ribosomal_uS2_flav_dom_sf"/>
</dbReference>
<dbReference type="NCBIfam" id="TIGR01012">
    <property type="entry name" value="uS2_euk_arch"/>
    <property type="match status" value="1"/>
</dbReference>
<dbReference type="PANTHER" id="PTHR11489">
    <property type="entry name" value="40S RIBOSOMAL PROTEIN SA"/>
    <property type="match status" value="1"/>
</dbReference>
<dbReference type="Pfam" id="PF16122">
    <property type="entry name" value="40S_SA_C"/>
    <property type="match status" value="1"/>
</dbReference>
<dbReference type="Pfam" id="PF00318">
    <property type="entry name" value="Ribosomal_S2"/>
    <property type="match status" value="2"/>
</dbReference>
<dbReference type="PRINTS" id="PR00395">
    <property type="entry name" value="RIBOSOMALS2"/>
</dbReference>
<dbReference type="SUPFAM" id="SSF52313">
    <property type="entry name" value="Ribosomal protein S2"/>
    <property type="match status" value="1"/>
</dbReference>
<dbReference type="PROSITE" id="PS00962">
    <property type="entry name" value="RIBOSOMAL_S2_1"/>
    <property type="match status" value="1"/>
</dbReference>
<dbReference type="PROSITE" id="PS00963">
    <property type="entry name" value="RIBOSOMAL_S2_2"/>
    <property type="match status" value="1"/>
</dbReference>
<proteinExistence type="evidence at transcript level"/>
<accession>A3RLT6</accession>